<name>MOBA_BRUME</name>
<proteinExistence type="inferred from homology"/>
<keyword id="KW-0963">Cytoplasm</keyword>
<keyword id="KW-0342">GTP-binding</keyword>
<keyword id="KW-0460">Magnesium</keyword>
<keyword id="KW-0479">Metal-binding</keyword>
<keyword id="KW-0501">Molybdenum cofactor biosynthesis</keyword>
<keyword id="KW-0547">Nucleotide-binding</keyword>
<keyword id="KW-0808">Transferase</keyword>
<reference key="1">
    <citation type="journal article" date="2002" name="Proc. Natl. Acad. Sci. U.S.A.">
        <title>The genome sequence of the facultative intracellular pathogen Brucella melitensis.</title>
        <authorList>
            <person name="DelVecchio V.G."/>
            <person name="Kapatral V."/>
            <person name="Redkar R.J."/>
            <person name="Patra G."/>
            <person name="Mujer C."/>
            <person name="Los T."/>
            <person name="Ivanova N."/>
            <person name="Anderson I."/>
            <person name="Bhattacharyya A."/>
            <person name="Lykidis A."/>
            <person name="Reznik G."/>
            <person name="Jablonski L."/>
            <person name="Larsen N."/>
            <person name="D'Souza M."/>
            <person name="Bernal A."/>
            <person name="Mazur M."/>
            <person name="Goltsman E."/>
            <person name="Selkov E."/>
            <person name="Elzer P.H."/>
            <person name="Hagius S."/>
            <person name="O'Callaghan D."/>
            <person name="Letesson J.-J."/>
            <person name="Haselkorn R."/>
            <person name="Kyrpides N.C."/>
            <person name="Overbeek R."/>
        </authorList>
    </citation>
    <scope>NUCLEOTIDE SEQUENCE [LARGE SCALE GENOMIC DNA]</scope>
    <source>
        <strain>ATCC 23456 / CCUG 17765 / NCTC 10094 / 16M</strain>
    </source>
</reference>
<evidence type="ECO:0000255" key="1">
    <source>
        <dbReference type="HAMAP-Rule" id="MF_00316"/>
    </source>
</evidence>
<feature type="chain" id="PRO_0000134882" description="Molybdenum cofactor guanylyltransferase">
    <location>
        <begin position="1"/>
        <end position="221"/>
    </location>
</feature>
<feature type="binding site" evidence="1">
    <location>
        <begin position="18"/>
        <end position="20"/>
    </location>
    <ligand>
        <name>GTP</name>
        <dbReference type="ChEBI" id="CHEBI:37565"/>
    </ligand>
</feature>
<feature type="binding site" evidence="1">
    <location>
        <position position="35"/>
    </location>
    <ligand>
        <name>GTP</name>
        <dbReference type="ChEBI" id="CHEBI:37565"/>
    </ligand>
</feature>
<feature type="binding site" evidence="1">
    <location>
        <position position="63"/>
    </location>
    <ligand>
        <name>GTP</name>
        <dbReference type="ChEBI" id="CHEBI:37565"/>
    </ligand>
</feature>
<feature type="binding site" evidence="1">
    <location>
        <position position="81"/>
    </location>
    <ligand>
        <name>GTP</name>
        <dbReference type="ChEBI" id="CHEBI:37565"/>
    </ligand>
</feature>
<feature type="binding site" evidence="1">
    <location>
        <position position="112"/>
    </location>
    <ligand>
        <name>GTP</name>
        <dbReference type="ChEBI" id="CHEBI:37565"/>
    </ligand>
</feature>
<feature type="binding site" evidence="1">
    <location>
        <position position="112"/>
    </location>
    <ligand>
        <name>Mg(2+)</name>
        <dbReference type="ChEBI" id="CHEBI:18420"/>
    </ligand>
</feature>
<dbReference type="EC" id="2.7.7.77" evidence="1"/>
<dbReference type="EMBL" id="AE008917">
    <property type="protein sequence ID" value="AAL52201.1"/>
    <property type="molecule type" value="Genomic_DNA"/>
</dbReference>
<dbReference type="PIR" id="AF3379">
    <property type="entry name" value="AF3379"/>
</dbReference>
<dbReference type="RefSeq" id="WP_004683729.1">
    <property type="nucleotide sequence ID" value="NZ_GG703778.1"/>
</dbReference>
<dbReference type="SMR" id="Q8YGY5"/>
<dbReference type="GeneID" id="29593846"/>
<dbReference type="KEGG" id="bme:BMEI1020"/>
<dbReference type="eggNOG" id="COG0746">
    <property type="taxonomic scope" value="Bacteria"/>
</dbReference>
<dbReference type="Proteomes" id="UP000000419">
    <property type="component" value="Chromosome I"/>
</dbReference>
<dbReference type="GO" id="GO:0005737">
    <property type="term" value="C:cytoplasm"/>
    <property type="evidence" value="ECO:0007669"/>
    <property type="project" value="UniProtKB-SubCell"/>
</dbReference>
<dbReference type="GO" id="GO:0005525">
    <property type="term" value="F:GTP binding"/>
    <property type="evidence" value="ECO:0007669"/>
    <property type="project" value="UniProtKB-UniRule"/>
</dbReference>
<dbReference type="GO" id="GO:0046872">
    <property type="term" value="F:metal ion binding"/>
    <property type="evidence" value="ECO:0007669"/>
    <property type="project" value="UniProtKB-KW"/>
</dbReference>
<dbReference type="GO" id="GO:0061603">
    <property type="term" value="F:molybdenum cofactor guanylyltransferase activity"/>
    <property type="evidence" value="ECO:0007669"/>
    <property type="project" value="UniProtKB-EC"/>
</dbReference>
<dbReference type="GO" id="GO:1902758">
    <property type="term" value="P:bis(molybdopterin guanine dinucleotide)molybdenum biosynthetic process"/>
    <property type="evidence" value="ECO:0007669"/>
    <property type="project" value="TreeGrafter"/>
</dbReference>
<dbReference type="CDD" id="cd02503">
    <property type="entry name" value="MobA"/>
    <property type="match status" value="1"/>
</dbReference>
<dbReference type="Gene3D" id="3.90.550.10">
    <property type="entry name" value="Spore Coat Polysaccharide Biosynthesis Protein SpsA, Chain A"/>
    <property type="match status" value="1"/>
</dbReference>
<dbReference type="HAMAP" id="MF_00316">
    <property type="entry name" value="MobA"/>
    <property type="match status" value="1"/>
</dbReference>
<dbReference type="InterPro" id="IPR025877">
    <property type="entry name" value="MobA-like_NTP_Trfase"/>
</dbReference>
<dbReference type="InterPro" id="IPR013482">
    <property type="entry name" value="Molybde_CF_guanTrfase"/>
</dbReference>
<dbReference type="InterPro" id="IPR029044">
    <property type="entry name" value="Nucleotide-diphossugar_trans"/>
</dbReference>
<dbReference type="PANTHER" id="PTHR19136">
    <property type="entry name" value="MOLYBDENUM COFACTOR GUANYLYLTRANSFERASE"/>
    <property type="match status" value="1"/>
</dbReference>
<dbReference type="PANTHER" id="PTHR19136:SF81">
    <property type="entry name" value="MOLYBDENUM COFACTOR GUANYLYLTRANSFERASE"/>
    <property type="match status" value="1"/>
</dbReference>
<dbReference type="Pfam" id="PF12804">
    <property type="entry name" value="NTP_transf_3"/>
    <property type="match status" value="1"/>
</dbReference>
<dbReference type="SUPFAM" id="SSF53448">
    <property type="entry name" value="Nucleotide-diphospho-sugar transferases"/>
    <property type="match status" value="1"/>
</dbReference>
<comment type="function">
    <text evidence="1">Transfers a GMP moiety from GTP to Mo-molybdopterin (Mo-MPT) cofactor (Moco or molybdenum cofactor) to form Mo-molybdopterin guanine dinucleotide (Mo-MGD) cofactor.</text>
</comment>
<comment type="catalytic activity">
    <reaction evidence="1">
        <text>Mo-molybdopterin + GTP + H(+) = Mo-molybdopterin guanine dinucleotide + diphosphate</text>
        <dbReference type="Rhea" id="RHEA:34243"/>
        <dbReference type="ChEBI" id="CHEBI:15378"/>
        <dbReference type="ChEBI" id="CHEBI:33019"/>
        <dbReference type="ChEBI" id="CHEBI:37565"/>
        <dbReference type="ChEBI" id="CHEBI:71302"/>
        <dbReference type="ChEBI" id="CHEBI:71310"/>
        <dbReference type="EC" id="2.7.7.77"/>
    </reaction>
</comment>
<comment type="cofactor">
    <cofactor evidence="1">
        <name>Mg(2+)</name>
        <dbReference type="ChEBI" id="CHEBI:18420"/>
    </cofactor>
</comment>
<comment type="subunit">
    <text evidence="1">Monomer.</text>
</comment>
<comment type="subcellular location">
    <subcellularLocation>
        <location evidence="1">Cytoplasm</location>
    </subcellularLocation>
</comment>
<comment type="domain">
    <text evidence="1">The N-terminal domain determines nucleotide recognition and specific binding, while the C-terminal domain determines the specific binding to the target protein.</text>
</comment>
<comment type="similarity">
    <text evidence="1">Belongs to the MobA family.</text>
</comment>
<gene>
    <name evidence="1" type="primary">mobA</name>
    <name type="ordered locus">BMEI1020</name>
</gene>
<organism>
    <name type="scientific">Brucella melitensis biotype 1 (strain ATCC 23456 / CCUG 17765 / NCTC 10094 / 16M)</name>
    <dbReference type="NCBI Taxonomy" id="224914"/>
    <lineage>
        <taxon>Bacteria</taxon>
        <taxon>Pseudomonadati</taxon>
        <taxon>Pseudomonadota</taxon>
        <taxon>Alphaproteobacteria</taxon>
        <taxon>Hyphomicrobiales</taxon>
        <taxon>Brucellaceae</taxon>
        <taxon>Brucella/Ochrobactrum group</taxon>
        <taxon>Brucella</taxon>
    </lineage>
</organism>
<accession>Q8YGY5</accession>
<protein>
    <recommendedName>
        <fullName evidence="1">Molybdenum cofactor guanylyltransferase</fullName>
        <shortName evidence="1">MoCo guanylyltransferase</shortName>
        <ecNumber evidence="1">2.7.7.77</ecNumber>
    </recommendedName>
    <alternativeName>
        <fullName evidence="1">GTP:molybdopterin guanylyltransferase</fullName>
    </alternativeName>
    <alternativeName>
        <fullName evidence="1">Mo-MPT guanylyltransferase</fullName>
    </alternativeName>
    <alternativeName>
        <fullName evidence="1">Molybdopterin guanylyltransferase</fullName>
    </alternativeName>
    <alternativeName>
        <fullName evidence="1">Molybdopterin-guanine dinucleotide synthase</fullName>
        <shortName evidence="1">MGD synthase</shortName>
    </alternativeName>
</protein>
<sequence>MRAGQPKITGAKITGAIIAGGQSSRMQAGGVSGDKFLQPLGSAPVIAHVIARLQPQVDTLFINSKGDLSRFAAFGLPAVKDIAMNHGGPLVGLLTCLAHASPCRLLLTSAADTPFLPCDLASNLIRKQAETGARIILACSNERVHPIVGLWHTDLVPDLEKWLQYAEKASIFWFAKHIGFEVVNIPLAHAPRLAESYDPFFNINLPDDLLKAREINEALQA</sequence>